<dbReference type="EC" id="1.2.1.41" evidence="1"/>
<dbReference type="EMBL" id="AM406671">
    <property type="protein sequence ID" value="CAL97481.1"/>
    <property type="status" value="ALT_INIT"/>
    <property type="molecule type" value="Genomic_DNA"/>
</dbReference>
<dbReference type="RefSeq" id="WP_041931271.1">
    <property type="nucleotide sequence ID" value="NC_009004.1"/>
</dbReference>
<dbReference type="SMR" id="A2RJM8"/>
<dbReference type="STRING" id="416870.llmg_0886"/>
<dbReference type="KEGG" id="llm:llmg_0886"/>
<dbReference type="eggNOG" id="COG0014">
    <property type="taxonomic scope" value="Bacteria"/>
</dbReference>
<dbReference type="HOGENOM" id="CLU_030231_0_0_9"/>
<dbReference type="OrthoDB" id="9809970at2"/>
<dbReference type="UniPathway" id="UPA00098">
    <property type="reaction ID" value="UER00360"/>
</dbReference>
<dbReference type="Proteomes" id="UP000000364">
    <property type="component" value="Chromosome"/>
</dbReference>
<dbReference type="GO" id="GO:0005737">
    <property type="term" value="C:cytoplasm"/>
    <property type="evidence" value="ECO:0007669"/>
    <property type="project" value="UniProtKB-SubCell"/>
</dbReference>
<dbReference type="GO" id="GO:0004350">
    <property type="term" value="F:glutamate-5-semialdehyde dehydrogenase activity"/>
    <property type="evidence" value="ECO:0007669"/>
    <property type="project" value="UniProtKB-UniRule"/>
</dbReference>
<dbReference type="GO" id="GO:0050661">
    <property type="term" value="F:NADP binding"/>
    <property type="evidence" value="ECO:0007669"/>
    <property type="project" value="InterPro"/>
</dbReference>
<dbReference type="GO" id="GO:0055129">
    <property type="term" value="P:L-proline biosynthetic process"/>
    <property type="evidence" value="ECO:0007669"/>
    <property type="project" value="UniProtKB-UniRule"/>
</dbReference>
<dbReference type="CDD" id="cd07079">
    <property type="entry name" value="ALDH_F18-19_ProA-GPR"/>
    <property type="match status" value="1"/>
</dbReference>
<dbReference type="FunFam" id="3.40.309.10:FF:000006">
    <property type="entry name" value="Gamma-glutamyl phosphate reductase"/>
    <property type="match status" value="1"/>
</dbReference>
<dbReference type="Gene3D" id="3.40.605.10">
    <property type="entry name" value="Aldehyde Dehydrogenase, Chain A, domain 1"/>
    <property type="match status" value="1"/>
</dbReference>
<dbReference type="Gene3D" id="3.40.309.10">
    <property type="entry name" value="Aldehyde Dehydrogenase, Chain A, domain 2"/>
    <property type="match status" value="1"/>
</dbReference>
<dbReference type="HAMAP" id="MF_00412">
    <property type="entry name" value="ProA"/>
    <property type="match status" value="1"/>
</dbReference>
<dbReference type="InterPro" id="IPR016161">
    <property type="entry name" value="Ald_DH/histidinol_DH"/>
</dbReference>
<dbReference type="InterPro" id="IPR016163">
    <property type="entry name" value="Ald_DH_C"/>
</dbReference>
<dbReference type="InterPro" id="IPR016162">
    <property type="entry name" value="Ald_DH_N"/>
</dbReference>
<dbReference type="InterPro" id="IPR015590">
    <property type="entry name" value="Aldehyde_DH_dom"/>
</dbReference>
<dbReference type="InterPro" id="IPR020593">
    <property type="entry name" value="G-glutamylP_reductase_CS"/>
</dbReference>
<dbReference type="InterPro" id="IPR012134">
    <property type="entry name" value="Glu-5-SA_DH"/>
</dbReference>
<dbReference type="InterPro" id="IPR000965">
    <property type="entry name" value="GPR_dom"/>
</dbReference>
<dbReference type="NCBIfam" id="NF001221">
    <property type="entry name" value="PRK00197.1"/>
    <property type="match status" value="1"/>
</dbReference>
<dbReference type="NCBIfam" id="TIGR00407">
    <property type="entry name" value="proA"/>
    <property type="match status" value="1"/>
</dbReference>
<dbReference type="PANTHER" id="PTHR11063:SF8">
    <property type="entry name" value="DELTA-1-PYRROLINE-5-CARBOXYLATE SYNTHASE"/>
    <property type="match status" value="1"/>
</dbReference>
<dbReference type="PANTHER" id="PTHR11063">
    <property type="entry name" value="GLUTAMATE SEMIALDEHYDE DEHYDROGENASE"/>
    <property type="match status" value="1"/>
</dbReference>
<dbReference type="Pfam" id="PF00171">
    <property type="entry name" value="Aldedh"/>
    <property type="match status" value="2"/>
</dbReference>
<dbReference type="PIRSF" id="PIRSF000151">
    <property type="entry name" value="GPR"/>
    <property type="match status" value="1"/>
</dbReference>
<dbReference type="SUPFAM" id="SSF53720">
    <property type="entry name" value="ALDH-like"/>
    <property type="match status" value="1"/>
</dbReference>
<dbReference type="PROSITE" id="PS01223">
    <property type="entry name" value="PROA"/>
    <property type="match status" value="1"/>
</dbReference>
<keyword id="KW-0028">Amino-acid biosynthesis</keyword>
<keyword id="KW-0963">Cytoplasm</keyword>
<keyword id="KW-0521">NADP</keyword>
<keyword id="KW-0560">Oxidoreductase</keyword>
<keyword id="KW-0641">Proline biosynthesis</keyword>
<sequence>MIEELGLKVKTASKEAAKLSTAEKNTFLQKLADSLVENTDRIISENAKDLAKAKGHGISEIMVDRLRLTAQRISDMATGLRQVAELPDPIGQVLQGFTNLDGLKIVQKRVPLGTVGMIFESRPNVTIDAFSLCFKTGNSVLLRGGSDAIYSNMVLVEIIKENLLSAKITDGVVELLSDTSHAEAEKMMQADKFLDVLIPRGSARLINRVKEKATVPVIETGVGNCTIFVDESADLDMATRIVINAKTQRPSVCNAAESLVVHAKIADEFLPKLQNEINKVHEVEFRADERSLKALSAGIPATDEDFGMEFLDYILSVKTVDNLDEAIEHINTYSSRHSESIVTHDYFNAQKFQDEIDAAAVYVNASTRFTDGFVFGLGAEIGISTQKLHARGPMGLEALTSTKYLIDGCGQIR</sequence>
<comment type="function">
    <text evidence="1">Catalyzes the NADPH-dependent reduction of L-glutamate 5-phosphate into L-glutamate 5-semialdehyde and phosphate. The product spontaneously undergoes cyclization to form 1-pyrroline-5-carboxylate.</text>
</comment>
<comment type="catalytic activity">
    <reaction evidence="1">
        <text>L-glutamate 5-semialdehyde + phosphate + NADP(+) = L-glutamyl 5-phosphate + NADPH + H(+)</text>
        <dbReference type="Rhea" id="RHEA:19541"/>
        <dbReference type="ChEBI" id="CHEBI:15378"/>
        <dbReference type="ChEBI" id="CHEBI:43474"/>
        <dbReference type="ChEBI" id="CHEBI:57783"/>
        <dbReference type="ChEBI" id="CHEBI:58066"/>
        <dbReference type="ChEBI" id="CHEBI:58274"/>
        <dbReference type="ChEBI" id="CHEBI:58349"/>
        <dbReference type="EC" id="1.2.1.41"/>
    </reaction>
</comment>
<comment type="pathway">
    <text evidence="1">Amino-acid biosynthesis; L-proline biosynthesis; L-glutamate 5-semialdehyde from L-glutamate: step 2/2.</text>
</comment>
<comment type="subcellular location">
    <subcellularLocation>
        <location evidence="1">Cytoplasm</location>
    </subcellularLocation>
</comment>
<comment type="similarity">
    <text evidence="1">Belongs to the gamma-glutamyl phosphate reductase family.</text>
</comment>
<comment type="sequence caution" evidence="2">
    <conflict type="erroneous initiation">
        <sequence resource="EMBL-CDS" id="CAL97481"/>
    </conflict>
</comment>
<accession>A2RJM8</accession>
<name>PROA_LACLM</name>
<gene>
    <name evidence="1" type="primary">proA</name>
    <name type="ordered locus">llmg_0886</name>
</gene>
<evidence type="ECO:0000255" key="1">
    <source>
        <dbReference type="HAMAP-Rule" id="MF_00412"/>
    </source>
</evidence>
<evidence type="ECO:0000305" key="2"/>
<proteinExistence type="inferred from homology"/>
<organism>
    <name type="scientific">Lactococcus lactis subsp. cremoris (strain MG1363)</name>
    <dbReference type="NCBI Taxonomy" id="416870"/>
    <lineage>
        <taxon>Bacteria</taxon>
        <taxon>Bacillati</taxon>
        <taxon>Bacillota</taxon>
        <taxon>Bacilli</taxon>
        <taxon>Lactobacillales</taxon>
        <taxon>Streptococcaceae</taxon>
        <taxon>Lactococcus</taxon>
        <taxon>Lactococcus cremoris subsp. cremoris</taxon>
    </lineage>
</organism>
<protein>
    <recommendedName>
        <fullName evidence="1">Gamma-glutamyl phosphate reductase</fullName>
        <shortName evidence="1">GPR</shortName>
        <ecNumber evidence="1">1.2.1.41</ecNumber>
    </recommendedName>
    <alternativeName>
        <fullName evidence="1">Glutamate-5-semialdehyde dehydrogenase</fullName>
    </alternativeName>
    <alternativeName>
        <fullName evidence="1">Glutamyl-gamma-semialdehyde dehydrogenase</fullName>
        <shortName evidence="1">GSA dehydrogenase</shortName>
    </alternativeName>
</protein>
<reference key="1">
    <citation type="journal article" date="2007" name="J. Bacteriol.">
        <title>The complete genome sequence of the lactic acid bacterial paradigm Lactococcus lactis subsp. cremoris MG1363.</title>
        <authorList>
            <person name="Wegmann U."/>
            <person name="O'Connell-Motherway M."/>
            <person name="Zomer A."/>
            <person name="Buist G."/>
            <person name="Shearman C."/>
            <person name="Canchaya C."/>
            <person name="Ventura M."/>
            <person name="Goesmann A."/>
            <person name="Gasson M.J."/>
            <person name="Kuipers O.P."/>
            <person name="van Sinderen D."/>
            <person name="Kok J."/>
        </authorList>
    </citation>
    <scope>NUCLEOTIDE SEQUENCE [LARGE SCALE GENOMIC DNA]</scope>
    <source>
        <strain>MG1363</strain>
    </source>
</reference>
<feature type="chain" id="PRO_0000340888" description="Gamma-glutamyl phosphate reductase">
    <location>
        <begin position="1"/>
        <end position="413"/>
    </location>
</feature>